<feature type="chain" id="PRO_0000255088" description="Cytochrome b">
    <location>
        <begin position="1"/>
        <end position="380"/>
    </location>
</feature>
<feature type="transmembrane region" description="Helical" evidence="2">
    <location>
        <begin position="33"/>
        <end position="53"/>
    </location>
</feature>
<feature type="transmembrane region" description="Helical" evidence="2">
    <location>
        <begin position="77"/>
        <end position="98"/>
    </location>
</feature>
<feature type="transmembrane region" description="Helical" evidence="2">
    <location>
        <begin position="113"/>
        <end position="133"/>
    </location>
</feature>
<feature type="transmembrane region" description="Helical" evidence="2">
    <location>
        <begin position="178"/>
        <end position="198"/>
    </location>
</feature>
<feature type="transmembrane region" description="Helical" evidence="2">
    <location>
        <begin position="226"/>
        <end position="246"/>
    </location>
</feature>
<feature type="transmembrane region" description="Helical" evidence="2">
    <location>
        <begin position="288"/>
        <end position="308"/>
    </location>
</feature>
<feature type="transmembrane region" description="Helical" evidence="2">
    <location>
        <begin position="320"/>
        <end position="340"/>
    </location>
</feature>
<feature type="transmembrane region" description="Helical" evidence="2">
    <location>
        <begin position="347"/>
        <end position="367"/>
    </location>
</feature>
<feature type="binding site" description="axial binding residue" evidence="2">
    <location>
        <position position="83"/>
    </location>
    <ligand>
        <name>heme b</name>
        <dbReference type="ChEBI" id="CHEBI:60344"/>
        <label>b562</label>
    </ligand>
    <ligandPart>
        <name>Fe</name>
        <dbReference type="ChEBI" id="CHEBI:18248"/>
    </ligandPart>
</feature>
<feature type="binding site" description="axial binding residue" evidence="2">
    <location>
        <position position="97"/>
    </location>
    <ligand>
        <name>heme b</name>
        <dbReference type="ChEBI" id="CHEBI:60344"/>
        <label>b566</label>
    </ligand>
    <ligandPart>
        <name>Fe</name>
        <dbReference type="ChEBI" id="CHEBI:18248"/>
    </ligandPart>
</feature>
<feature type="binding site" description="axial binding residue" evidence="2">
    <location>
        <position position="182"/>
    </location>
    <ligand>
        <name>heme b</name>
        <dbReference type="ChEBI" id="CHEBI:60344"/>
        <label>b562</label>
    </ligand>
    <ligandPart>
        <name>Fe</name>
        <dbReference type="ChEBI" id="CHEBI:18248"/>
    </ligandPart>
</feature>
<feature type="binding site" description="axial binding residue" evidence="2">
    <location>
        <position position="196"/>
    </location>
    <ligand>
        <name>heme b</name>
        <dbReference type="ChEBI" id="CHEBI:60344"/>
        <label>b566</label>
    </ligand>
    <ligandPart>
        <name>Fe</name>
        <dbReference type="ChEBI" id="CHEBI:18248"/>
    </ligandPart>
</feature>
<feature type="binding site" evidence="2">
    <location>
        <position position="201"/>
    </location>
    <ligand>
        <name>a ubiquinone</name>
        <dbReference type="ChEBI" id="CHEBI:16389"/>
    </ligand>
</feature>
<keyword id="KW-0249">Electron transport</keyword>
<keyword id="KW-0349">Heme</keyword>
<keyword id="KW-0408">Iron</keyword>
<keyword id="KW-0472">Membrane</keyword>
<keyword id="KW-0479">Metal-binding</keyword>
<keyword id="KW-0496">Mitochondrion</keyword>
<keyword id="KW-0999">Mitochondrion inner membrane</keyword>
<keyword id="KW-0679">Respiratory chain</keyword>
<keyword id="KW-0812">Transmembrane</keyword>
<keyword id="KW-1133">Transmembrane helix</keyword>
<keyword id="KW-0813">Transport</keyword>
<keyword id="KW-0830">Ubiquinone</keyword>
<evidence type="ECO:0000250" key="1"/>
<evidence type="ECO:0000250" key="2">
    <source>
        <dbReference type="UniProtKB" id="P00157"/>
    </source>
</evidence>
<evidence type="ECO:0000255" key="3">
    <source>
        <dbReference type="PROSITE-ProRule" id="PRU00967"/>
    </source>
</evidence>
<evidence type="ECO:0000255" key="4">
    <source>
        <dbReference type="PROSITE-ProRule" id="PRU00968"/>
    </source>
</evidence>
<reference key="1">
    <citation type="journal article" date="2000" name="J. Mammal.">
        <title>Molecular systematics of a holarctic rodent (Microtus, Muridae).</title>
        <authorList>
            <person name="Conroy C.J."/>
            <person name="Cook J.A."/>
        </authorList>
    </citation>
    <scope>NUCLEOTIDE SEQUENCE [GENOMIC DNA]</scope>
</reference>
<geneLocation type="mitochondrion"/>
<comment type="function">
    <text evidence="2">Component of the ubiquinol-cytochrome c reductase complex (complex III or cytochrome b-c1 complex) that is part of the mitochondrial respiratory chain. The b-c1 complex mediates electron transfer from ubiquinol to cytochrome c. Contributes to the generation of a proton gradient across the mitochondrial membrane that is then used for ATP synthesis.</text>
</comment>
<comment type="cofactor">
    <cofactor evidence="2">
        <name>heme b</name>
        <dbReference type="ChEBI" id="CHEBI:60344"/>
    </cofactor>
    <text evidence="2">Binds 2 heme b groups non-covalently.</text>
</comment>
<comment type="subunit">
    <text evidence="2">The cytochrome bc1 complex contains 11 subunits: 3 respiratory subunits (MT-CYB, CYC1 and UQCRFS1), 2 core proteins (UQCRC1 and UQCRC2) and 6 low-molecular weight proteins (UQCRH/QCR6, UQCRB/QCR7, UQCRQ/QCR8, UQCR10/QCR9, UQCR11/QCR10 and a cleavage product of UQCRFS1). This cytochrome bc1 complex then forms a dimer.</text>
</comment>
<comment type="subcellular location">
    <subcellularLocation>
        <location evidence="2">Mitochondrion inner membrane</location>
        <topology evidence="2">Multi-pass membrane protein</topology>
    </subcellularLocation>
</comment>
<comment type="miscellaneous">
    <text evidence="1">Heme 1 (or BL or b562) is low-potential and absorbs at about 562 nm, and heme 2 (or BH or b566) is high-potential and absorbs at about 566 nm.</text>
</comment>
<comment type="similarity">
    <text evidence="3 4">Belongs to the cytochrome b family.</text>
</comment>
<comment type="caution">
    <text evidence="2">The full-length protein contains only eight transmembrane helices, not nine as predicted by bioinformatics tools.</text>
</comment>
<accession>Q9T7M3</accession>
<dbReference type="EMBL" id="AF163899">
    <property type="protein sequence ID" value="AAF24191.1"/>
    <property type="molecule type" value="Genomic_DNA"/>
</dbReference>
<dbReference type="SMR" id="Q9T7M3"/>
<dbReference type="GO" id="GO:0005743">
    <property type="term" value="C:mitochondrial inner membrane"/>
    <property type="evidence" value="ECO:0007669"/>
    <property type="project" value="UniProtKB-SubCell"/>
</dbReference>
<dbReference type="GO" id="GO:0045275">
    <property type="term" value="C:respiratory chain complex III"/>
    <property type="evidence" value="ECO:0007669"/>
    <property type="project" value="InterPro"/>
</dbReference>
<dbReference type="GO" id="GO:0046872">
    <property type="term" value="F:metal ion binding"/>
    <property type="evidence" value="ECO:0007669"/>
    <property type="project" value="UniProtKB-KW"/>
</dbReference>
<dbReference type="GO" id="GO:0008121">
    <property type="term" value="F:ubiquinol-cytochrome-c reductase activity"/>
    <property type="evidence" value="ECO:0007669"/>
    <property type="project" value="InterPro"/>
</dbReference>
<dbReference type="GO" id="GO:0006122">
    <property type="term" value="P:mitochondrial electron transport, ubiquinol to cytochrome c"/>
    <property type="evidence" value="ECO:0007669"/>
    <property type="project" value="TreeGrafter"/>
</dbReference>
<dbReference type="CDD" id="cd00290">
    <property type="entry name" value="cytochrome_b_C"/>
    <property type="match status" value="1"/>
</dbReference>
<dbReference type="CDD" id="cd00284">
    <property type="entry name" value="Cytochrome_b_N"/>
    <property type="match status" value="1"/>
</dbReference>
<dbReference type="FunFam" id="1.20.810.10:FF:000002">
    <property type="entry name" value="Cytochrome b"/>
    <property type="match status" value="1"/>
</dbReference>
<dbReference type="Gene3D" id="1.20.810.10">
    <property type="entry name" value="Cytochrome Bc1 Complex, Chain C"/>
    <property type="match status" value="1"/>
</dbReference>
<dbReference type="InterPro" id="IPR005798">
    <property type="entry name" value="Cyt_b/b6_C"/>
</dbReference>
<dbReference type="InterPro" id="IPR036150">
    <property type="entry name" value="Cyt_b/b6_C_sf"/>
</dbReference>
<dbReference type="InterPro" id="IPR005797">
    <property type="entry name" value="Cyt_b/b6_N"/>
</dbReference>
<dbReference type="InterPro" id="IPR027387">
    <property type="entry name" value="Cytb/b6-like_sf"/>
</dbReference>
<dbReference type="InterPro" id="IPR030689">
    <property type="entry name" value="Cytochrome_b"/>
</dbReference>
<dbReference type="InterPro" id="IPR048260">
    <property type="entry name" value="Cytochrome_b_C_euk/bac"/>
</dbReference>
<dbReference type="InterPro" id="IPR048259">
    <property type="entry name" value="Cytochrome_b_N_euk/bac"/>
</dbReference>
<dbReference type="InterPro" id="IPR016174">
    <property type="entry name" value="Di-haem_cyt_TM"/>
</dbReference>
<dbReference type="PANTHER" id="PTHR19271">
    <property type="entry name" value="CYTOCHROME B"/>
    <property type="match status" value="1"/>
</dbReference>
<dbReference type="PANTHER" id="PTHR19271:SF16">
    <property type="entry name" value="CYTOCHROME B"/>
    <property type="match status" value="1"/>
</dbReference>
<dbReference type="Pfam" id="PF00032">
    <property type="entry name" value="Cytochrom_B_C"/>
    <property type="match status" value="1"/>
</dbReference>
<dbReference type="Pfam" id="PF00033">
    <property type="entry name" value="Cytochrome_B"/>
    <property type="match status" value="1"/>
</dbReference>
<dbReference type="PIRSF" id="PIRSF038885">
    <property type="entry name" value="COB"/>
    <property type="match status" value="1"/>
</dbReference>
<dbReference type="SUPFAM" id="SSF81648">
    <property type="entry name" value="a domain/subunit of cytochrome bc1 complex (Ubiquinol-cytochrome c reductase)"/>
    <property type="match status" value="1"/>
</dbReference>
<dbReference type="SUPFAM" id="SSF81342">
    <property type="entry name" value="Transmembrane di-heme cytochromes"/>
    <property type="match status" value="1"/>
</dbReference>
<dbReference type="PROSITE" id="PS51003">
    <property type="entry name" value="CYTB_CTER"/>
    <property type="match status" value="1"/>
</dbReference>
<dbReference type="PROSITE" id="PS51002">
    <property type="entry name" value="CYTB_NTER"/>
    <property type="match status" value="1"/>
</dbReference>
<proteinExistence type="inferred from homology"/>
<organism>
    <name type="scientific">Microtus miurus</name>
    <name type="common">Singing vole</name>
    <dbReference type="NCBI Taxonomy" id="111837"/>
    <lineage>
        <taxon>Eukaryota</taxon>
        <taxon>Metazoa</taxon>
        <taxon>Chordata</taxon>
        <taxon>Craniata</taxon>
        <taxon>Vertebrata</taxon>
        <taxon>Euteleostomi</taxon>
        <taxon>Mammalia</taxon>
        <taxon>Eutheria</taxon>
        <taxon>Euarchontoglires</taxon>
        <taxon>Glires</taxon>
        <taxon>Rodentia</taxon>
        <taxon>Myomorpha</taxon>
        <taxon>Muroidea</taxon>
        <taxon>Cricetidae</taxon>
        <taxon>Arvicolinae</taxon>
        <taxon>Microtus</taxon>
    </lineage>
</organism>
<name>CYB_MICMR</name>
<protein>
    <recommendedName>
        <fullName>Cytochrome b</fullName>
    </recommendedName>
    <alternativeName>
        <fullName>Complex III subunit 3</fullName>
    </alternativeName>
    <alternativeName>
        <fullName>Complex III subunit III</fullName>
    </alternativeName>
    <alternativeName>
        <fullName>Cytochrome b-c1 complex subunit 3</fullName>
    </alternativeName>
    <alternativeName>
        <fullName>Ubiquinol-cytochrome-c reductase complex cytochrome b subunit</fullName>
    </alternativeName>
</protein>
<sequence length="380" mass="42812">MTIIRKKHPLIKIINHSFIDLPAPSNISSWWNFGSLLGLCLITQILTGLFLAMHYTSDTATAFSSVAHICRDVNYGWLIRYMHANGASMFFICLFLHVGRGVYYGSYNMIETWNMGIILLFAVMATAFMGYVLPWGQMSFWGATVITNLLSAIPYIGTTLVEWIWGGFSVDKATLTRFFAFHFILPFIITALVLVHLLFLHETGSNNPTGLNSDSDKIPFHPYYTIKDFLGVLILLMAFMILTLFFPDILGDPDNYTPANPLNTPPHIKPEWYFLFAYAILRSIPNKLGGVLALILSILILALMPLLHTSKQRALTFRPITQTMYWILVADLLILTWIGGQPVEYPFIIIGQTASIAYFAIIVILMPIAGMIENNILDLD</sequence>
<gene>
    <name type="primary">MT-CYB</name>
    <name type="synonym">COB</name>
    <name type="synonym">CYTB</name>
    <name type="synonym">MTCYB</name>
</gene>